<organism>
    <name type="scientific">Pseudomonas savastanoi pv. phaseolicola (strain 1448A / Race 6)</name>
    <name type="common">Pseudomonas syringae pv. phaseolicola (strain 1448A / Race 6)</name>
    <dbReference type="NCBI Taxonomy" id="264730"/>
    <lineage>
        <taxon>Bacteria</taxon>
        <taxon>Pseudomonadati</taxon>
        <taxon>Pseudomonadota</taxon>
        <taxon>Gammaproteobacteria</taxon>
        <taxon>Pseudomonadales</taxon>
        <taxon>Pseudomonadaceae</taxon>
        <taxon>Pseudomonas</taxon>
    </lineage>
</organism>
<protein>
    <recommendedName>
        <fullName evidence="1">Phosphoribosyl-ATP pyrophosphatase</fullName>
        <shortName evidence="1">PRA-PH</shortName>
        <ecNumber evidence="1">3.6.1.31</ecNumber>
    </recommendedName>
</protein>
<accession>Q48PJ8</accession>
<gene>
    <name evidence="1" type="primary">hisE</name>
    <name type="ordered locus">PSPPH_0368</name>
</gene>
<proteinExistence type="inferred from homology"/>
<evidence type="ECO:0000255" key="1">
    <source>
        <dbReference type="HAMAP-Rule" id="MF_01020"/>
    </source>
</evidence>
<dbReference type="EC" id="3.6.1.31" evidence="1"/>
<dbReference type="EMBL" id="CP000058">
    <property type="protein sequence ID" value="AAZ33798.1"/>
    <property type="molecule type" value="Genomic_DNA"/>
</dbReference>
<dbReference type="RefSeq" id="WP_002551631.1">
    <property type="nucleotide sequence ID" value="NC_005773.3"/>
</dbReference>
<dbReference type="SMR" id="Q48PJ8"/>
<dbReference type="KEGG" id="psp:PSPPH_0368"/>
<dbReference type="eggNOG" id="COG0140">
    <property type="taxonomic scope" value="Bacteria"/>
</dbReference>
<dbReference type="HOGENOM" id="CLU_123337_1_2_6"/>
<dbReference type="UniPathway" id="UPA00031">
    <property type="reaction ID" value="UER00007"/>
</dbReference>
<dbReference type="Proteomes" id="UP000000551">
    <property type="component" value="Chromosome"/>
</dbReference>
<dbReference type="GO" id="GO:0005737">
    <property type="term" value="C:cytoplasm"/>
    <property type="evidence" value="ECO:0007669"/>
    <property type="project" value="UniProtKB-SubCell"/>
</dbReference>
<dbReference type="GO" id="GO:0005524">
    <property type="term" value="F:ATP binding"/>
    <property type="evidence" value="ECO:0007669"/>
    <property type="project" value="UniProtKB-KW"/>
</dbReference>
<dbReference type="GO" id="GO:0004636">
    <property type="term" value="F:phosphoribosyl-ATP diphosphatase activity"/>
    <property type="evidence" value="ECO:0007669"/>
    <property type="project" value="UniProtKB-UniRule"/>
</dbReference>
<dbReference type="GO" id="GO:0000105">
    <property type="term" value="P:L-histidine biosynthetic process"/>
    <property type="evidence" value="ECO:0007669"/>
    <property type="project" value="UniProtKB-UniRule"/>
</dbReference>
<dbReference type="CDD" id="cd11534">
    <property type="entry name" value="NTP-PPase_HisIE_like"/>
    <property type="match status" value="1"/>
</dbReference>
<dbReference type="Gene3D" id="1.10.287.1080">
    <property type="entry name" value="MazG-like"/>
    <property type="match status" value="1"/>
</dbReference>
<dbReference type="HAMAP" id="MF_01020">
    <property type="entry name" value="HisE"/>
    <property type="match status" value="1"/>
</dbReference>
<dbReference type="InterPro" id="IPR008179">
    <property type="entry name" value="HisE"/>
</dbReference>
<dbReference type="InterPro" id="IPR021130">
    <property type="entry name" value="PRib-ATP_PPHydrolase-like"/>
</dbReference>
<dbReference type="NCBIfam" id="TIGR03188">
    <property type="entry name" value="histidine_hisI"/>
    <property type="match status" value="1"/>
</dbReference>
<dbReference type="NCBIfam" id="NF001611">
    <property type="entry name" value="PRK00400.1-3"/>
    <property type="match status" value="1"/>
</dbReference>
<dbReference type="PANTHER" id="PTHR42945">
    <property type="entry name" value="HISTIDINE BIOSYNTHESIS BIFUNCTIONAL PROTEIN"/>
    <property type="match status" value="1"/>
</dbReference>
<dbReference type="PANTHER" id="PTHR42945:SF9">
    <property type="entry name" value="HISTIDINE BIOSYNTHESIS BIFUNCTIONAL PROTEIN HISIE"/>
    <property type="match status" value="1"/>
</dbReference>
<dbReference type="Pfam" id="PF01503">
    <property type="entry name" value="PRA-PH"/>
    <property type="match status" value="1"/>
</dbReference>
<dbReference type="SUPFAM" id="SSF101386">
    <property type="entry name" value="all-alpha NTP pyrophosphatases"/>
    <property type="match status" value="1"/>
</dbReference>
<reference key="1">
    <citation type="journal article" date="2005" name="J. Bacteriol.">
        <title>Whole-genome sequence analysis of Pseudomonas syringae pv. phaseolicola 1448A reveals divergence among pathovars in genes involved in virulence and transposition.</title>
        <authorList>
            <person name="Joardar V."/>
            <person name="Lindeberg M."/>
            <person name="Jackson R.W."/>
            <person name="Selengut J."/>
            <person name="Dodson R."/>
            <person name="Brinkac L.M."/>
            <person name="Daugherty S.C."/>
            <person name="DeBoy R.T."/>
            <person name="Durkin A.S."/>
            <person name="Gwinn Giglio M."/>
            <person name="Madupu R."/>
            <person name="Nelson W.C."/>
            <person name="Rosovitz M.J."/>
            <person name="Sullivan S.A."/>
            <person name="Crabtree J."/>
            <person name="Creasy T."/>
            <person name="Davidsen T.M."/>
            <person name="Haft D.H."/>
            <person name="Zafar N."/>
            <person name="Zhou L."/>
            <person name="Halpin R."/>
            <person name="Holley T."/>
            <person name="Khouri H.M."/>
            <person name="Feldblyum T.V."/>
            <person name="White O."/>
            <person name="Fraser C.M."/>
            <person name="Chatterjee A.K."/>
            <person name="Cartinhour S."/>
            <person name="Schneider D."/>
            <person name="Mansfield J.W."/>
            <person name="Collmer A."/>
            <person name="Buell R."/>
        </authorList>
    </citation>
    <scope>NUCLEOTIDE SEQUENCE [LARGE SCALE GENOMIC DNA]</scope>
    <source>
        <strain>1448A / Race 6</strain>
    </source>
</reference>
<name>HIS2_PSE14</name>
<feature type="chain" id="PRO_0000230187" description="Phosphoribosyl-ATP pyrophosphatase">
    <location>
        <begin position="1"/>
        <end position="110"/>
    </location>
</feature>
<comment type="catalytic activity">
    <reaction evidence="1">
        <text>1-(5-phospho-beta-D-ribosyl)-ATP + H2O = 1-(5-phospho-beta-D-ribosyl)-5'-AMP + diphosphate + H(+)</text>
        <dbReference type="Rhea" id="RHEA:22828"/>
        <dbReference type="ChEBI" id="CHEBI:15377"/>
        <dbReference type="ChEBI" id="CHEBI:15378"/>
        <dbReference type="ChEBI" id="CHEBI:33019"/>
        <dbReference type="ChEBI" id="CHEBI:59457"/>
        <dbReference type="ChEBI" id="CHEBI:73183"/>
        <dbReference type="EC" id="3.6.1.31"/>
    </reaction>
</comment>
<comment type="pathway">
    <text evidence="1">Amino-acid biosynthesis; L-histidine biosynthesis; L-histidine from 5-phospho-alpha-D-ribose 1-diphosphate: step 2/9.</text>
</comment>
<comment type="subcellular location">
    <subcellularLocation>
        <location evidence="1">Cytoplasm</location>
    </subcellularLocation>
</comment>
<comment type="similarity">
    <text evidence="1">Belongs to the PRA-PH family.</text>
</comment>
<sequence length="110" mass="11936">MTDTLSRLAEVLESRKDAAADSSYVASLYHKGLNKILEKLGEESIETIIAAKDAAVSGDCSDVIYETADLWFHSMVMLAALGQHPQAVLDELDRRFGLSGHAEKAARTAE</sequence>
<keyword id="KW-0028">Amino-acid biosynthesis</keyword>
<keyword id="KW-0067">ATP-binding</keyword>
<keyword id="KW-0963">Cytoplasm</keyword>
<keyword id="KW-0368">Histidine biosynthesis</keyword>
<keyword id="KW-0378">Hydrolase</keyword>
<keyword id="KW-0547">Nucleotide-binding</keyword>